<protein>
    <recommendedName>
        <fullName evidence="1">Translation initiation factor IF-1</fullName>
    </recommendedName>
</protein>
<gene>
    <name evidence="1" type="primary">infA</name>
    <name type="ordered locus">Adeh_1236</name>
</gene>
<evidence type="ECO:0000255" key="1">
    <source>
        <dbReference type="HAMAP-Rule" id="MF_00075"/>
    </source>
</evidence>
<reference key="1">
    <citation type="submission" date="2006-01" db="EMBL/GenBank/DDBJ databases">
        <title>Complete sequence of Anaeromyxobacter dehalogenans 2CP-C.</title>
        <authorList>
            <person name="Copeland A."/>
            <person name="Lucas S."/>
            <person name="Lapidus A."/>
            <person name="Barry K."/>
            <person name="Detter J.C."/>
            <person name="Glavina T."/>
            <person name="Hammon N."/>
            <person name="Israni S."/>
            <person name="Pitluck S."/>
            <person name="Brettin T."/>
            <person name="Bruce D."/>
            <person name="Han C."/>
            <person name="Tapia R."/>
            <person name="Gilna P."/>
            <person name="Kiss H."/>
            <person name="Schmutz J."/>
            <person name="Larimer F."/>
            <person name="Land M."/>
            <person name="Kyrpides N."/>
            <person name="Anderson I."/>
            <person name="Sanford R.A."/>
            <person name="Ritalahti K.M."/>
            <person name="Thomas H.S."/>
            <person name="Kirby J.R."/>
            <person name="Zhulin I.B."/>
            <person name="Loeffler F.E."/>
            <person name="Richardson P."/>
        </authorList>
    </citation>
    <scope>NUCLEOTIDE SEQUENCE [LARGE SCALE GENOMIC DNA]</scope>
    <source>
        <strain>2CP-C</strain>
    </source>
</reference>
<sequence>MSEKEAGIEVQGTVEEALAGGMYRVKVDQGPVVLAYASGKMKKFHIRIIPGDRVKLELSPYDLSRGRITYRDK</sequence>
<comment type="function">
    <text evidence="1">One of the essential components for the initiation of protein synthesis. Stabilizes the binding of IF-2 and IF-3 on the 30S subunit to which N-formylmethionyl-tRNA(fMet) subsequently binds. Helps modulate mRNA selection, yielding the 30S pre-initiation complex (PIC). Upon addition of the 50S ribosomal subunit IF-1, IF-2 and IF-3 are released leaving the mature 70S translation initiation complex.</text>
</comment>
<comment type="subunit">
    <text evidence="1">Component of the 30S ribosomal translation pre-initiation complex which assembles on the 30S ribosome in the order IF-2 and IF-3, IF-1 and N-formylmethionyl-tRNA(fMet); mRNA recruitment can occur at any time during PIC assembly.</text>
</comment>
<comment type="subcellular location">
    <subcellularLocation>
        <location evidence="1">Cytoplasm</location>
    </subcellularLocation>
</comment>
<comment type="similarity">
    <text evidence="1">Belongs to the IF-1 family.</text>
</comment>
<name>IF1_ANADE</name>
<organism>
    <name type="scientific">Anaeromyxobacter dehalogenans (strain 2CP-C)</name>
    <dbReference type="NCBI Taxonomy" id="290397"/>
    <lineage>
        <taxon>Bacteria</taxon>
        <taxon>Pseudomonadati</taxon>
        <taxon>Myxococcota</taxon>
        <taxon>Myxococcia</taxon>
        <taxon>Myxococcales</taxon>
        <taxon>Cystobacterineae</taxon>
        <taxon>Anaeromyxobacteraceae</taxon>
        <taxon>Anaeromyxobacter</taxon>
    </lineage>
</organism>
<proteinExistence type="inferred from homology"/>
<dbReference type="EMBL" id="CP000251">
    <property type="protein sequence ID" value="ABC81010.1"/>
    <property type="molecule type" value="Genomic_DNA"/>
</dbReference>
<dbReference type="RefSeq" id="WP_011420293.1">
    <property type="nucleotide sequence ID" value="NC_007760.1"/>
</dbReference>
<dbReference type="SMR" id="Q2IQC5"/>
<dbReference type="STRING" id="290397.Adeh_1236"/>
<dbReference type="KEGG" id="ade:Adeh_1236"/>
<dbReference type="eggNOG" id="COG0361">
    <property type="taxonomic scope" value="Bacteria"/>
</dbReference>
<dbReference type="HOGENOM" id="CLU_151267_1_0_7"/>
<dbReference type="OrthoDB" id="9803250at2"/>
<dbReference type="Proteomes" id="UP000001935">
    <property type="component" value="Chromosome"/>
</dbReference>
<dbReference type="GO" id="GO:0005829">
    <property type="term" value="C:cytosol"/>
    <property type="evidence" value="ECO:0007669"/>
    <property type="project" value="TreeGrafter"/>
</dbReference>
<dbReference type="GO" id="GO:0043022">
    <property type="term" value="F:ribosome binding"/>
    <property type="evidence" value="ECO:0007669"/>
    <property type="project" value="UniProtKB-UniRule"/>
</dbReference>
<dbReference type="GO" id="GO:0019843">
    <property type="term" value="F:rRNA binding"/>
    <property type="evidence" value="ECO:0007669"/>
    <property type="project" value="UniProtKB-UniRule"/>
</dbReference>
<dbReference type="GO" id="GO:0003743">
    <property type="term" value="F:translation initiation factor activity"/>
    <property type="evidence" value="ECO:0007669"/>
    <property type="project" value="UniProtKB-UniRule"/>
</dbReference>
<dbReference type="CDD" id="cd04451">
    <property type="entry name" value="S1_IF1"/>
    <property type="match status" value="1"/>
</dbReference>
<dbReference type="FunFam" id="2.40.50.140:FF:000002">
    <property type="entry name" value="Translation initiation factor IF-1"/>
    <property type="match status" value="1"/>
</dbReference>
<dbReference type="Gene3D" id="2.40.50.140">
    <property type="entry name" value="Nucleic acid-binding proteins"/>
    <property type="match status" value="1"/>
</dbReference>
<dbReference type="HAMAP" id="MF_00075">
    <property type="entry name" value="IF_1"/>
    <property type="match status" value="1"/>
</dbReference>
<dbReference type="InterPro" id="IPR012340">
    <property type="entry name" value="NA-bd_OB-fold"/>
</dbReference>
<dbReference type="InterPro" id="IPR006196">
    <property type="entry name" value="RNA-binding_domain_S1_IF1"/>
</dbReference>
<dbReference type="InterPro" id="IPR004368">
    <property type="entry name" value="TIF_IF1"/>
</dbReference>
<dbReference type="NCBIfam" id="TIGR00008">
    <property type="entry name" value="infA"/>
    <property type="match status" value="1"/>
</dbReference>
<dbReference type="PANTHER" id="PTHR33370">
    <property type="entry name" value="TRANSLATION INITIATION FACTOR IF-1, CHLOROPLASTIC"/>
    <property type="match status" value="1"/>
</dbReference>
<dbReference type="PANTHER" id="PTHR33370:SF1">
    <property type="entry name" value="TRANSLATION INITIATION FACTOR IF-1, CHLOROPLASTIC"/>
    <property type="match status" value="1"/>
</dbReference>
<dbReference type="Pfam" id="PF01176">
    <property type="entry name" value="eIF-1a"/>
    <property type="match status" value="1"/>
</dbReference>
<dbReference type="SUPFAM" id="SSF50249">
    <property type="entry name" value="Nucleic acid-binding proteins"/>
    <property type="match status" value="1"/>
</dbReference>
<dbReference type="PROSITE" id="PS50832">
    <property type="entry name" value="S1_IF1_TYPE"/>
    <property type="match status" value="1"/>
</dbReference>
<keyword id="KW-0963">Cytoplasm</keyword>
<keyword id="KW-0396">Initiation factor</keyword>
<keyword id="KW-0648">Protein biosynthesis</keyword>
<keyword id="KW-1185">Reference proteome</keyword>
<keyword id="KW-0694">RNA-binding</keyword>
<keyword id="KW-0699">rRNA-binding</keyword>
<accession>Q2IQC5</accession>
<feature type="chain" id="PRO_0000263761" description="Translation initiation factor IF-1">
    <location>
        <begin position="1"/>
        <end position="73"/>
    </location>
</feature>
<feature type="domain" description="S1-like" evidence="1">
    <location>
        <begin position="1"/>
        <end position="73"/>
    </location>
</feature>